<reference key="1">
    <citation type="journal article" date="2004" name="Endocrinology">
        <title>Identification and characterization of an androgen-responsive gene encoding an aci-reductone dioxygenase-like protein in the rat prostate.</title>
        <authorList>
            <person name="Oram S."/>
            <person name="Jiang F."/>
            <person name="Cai X."/>
            <person name="Haleem R."/>
            <person name="Dincer Z."/>
            <person name="Wang Z."/>
        </authorList>
    </citation>
    <scope>NUCLEOTIDE SEQUENCE [MRNA]</scope>
    <scope>INDUCTION</scope>
    <scope>SUBCELLULAR LOCATION</scope>
    <scope>TISSUE SPECIFICITY</scope>
    <source>
        <strain>Sprague-Dawley</strain>
        <tissue>Prostate</tissue>
    </source>
</reference>
<reference key="2">
    <citation type="journal article" date="2004" name="Genome Res.">
        <title>The status, quality, and expansion of the NIH full-length cDNA project: the Mammalian Gene Collection (MGC).</title>
        <authorList>
            <consortium name="The MGC Project Team"/>
        </authorList>
    </citation>
    <scope>NUCLEOTIDE SEQUENCE [LARGE SCALE MRNA]</scope>
    <source>
        <tissue>Liver</tissue>
    </source>
</reference>
<organism>
    <name type="scientific">Rattus norvegicus</name>
    <name type="common">Rat</name>
    <dbReference type="NCBI Taxonomy" id="10116"/>
    <lineage>
        <taxon>Eukaryota</taxon>
        <taxon>Metazoa</taxon>
        <taxon>Chordata</taxon>
        <taxon>Craniata</taxon>
        <taxon>Vertebrata</taxon>
        <taxon>Euteleostomi</taxon>
        <taxon>Mammalia</taxon>
        <taxon>Eutheria</taxon>
        <taxon>Euarchontoglires</taxon>
        <taxon>Glires</taxon>
        <taxon>Rodentia</taxon>
        <taxon>Myomorpha</taxon>
        <taxon>Muroidea</taxon>
        <taxon>Muridae</taxon>
        <taxon>Murinae</taxon>
        <taxon>Rattus</taxon>
    </lineage>
</organism>
<comment type="function">
    <text evidence="1">Catalyzes 2 different reactions between oxygen and the acireductone 1,2-dihydroxy-3-keto-5-methylthiopentene (DHK-MTPene) depending upon the metal bound in the active site. Fe-containing acireductone dioxygenase (Fe-ARD) produces formate and 2-keto-4-methylthiobutyrate (KMTB), the alpha-ketoacid precursor of methionine in the methionine recycle pathway. Ni-containing acireductone dioxygenase (Ni-ARD) produces methylthiopropionate, carbon monoxide and formate, and does not lie on the methionine recycle pathway. Also down-regulates cell migration mediated by MMP14.</text>
</comment>
<comment type="catalytic activity">
    <reaction evidence="1">
        <text>1,2-dihydroxy-5-(methylsulfanyl)pent-1-en-3-one + O2 = 4-methylsulfanyl-2-oxobutanoate + formate + 2 H(+)</text>
        <dbReference type="Rhea" id="RHEA:24504"/>
        <dbReference type="ChEBI" id="CHEBI:15378"/>
        <dbReference type="ChEBI" id="CHEBI:15379"/>
        <dbReference type="ChEBI" id="CHEBI:15740"/>
        <dbReference type="ChEBI" id="CHEBI:16723"/>
        <dbReference type="ChEBI" id="CHEBI:49252"/>
        <dbReference type="EC" id="1.13.11.54"/>
    </reaction>
</comment>
<comment type="catalytic activity">
    <reaction evidence="1">
        <text>1,2-dihydroxy-5-(methylsulfanyl)pent-1-en-3-one + O2 = 3-(methylsulfanyl)propanoate + CO + formate + 2 H(+)</text>
        <dbReference type="Rhea" id="RHEA:14161"/>
        <dbReference type="ChEBI" id="CHEBI:15378"/>
        <dbReference type="ChEBI" id="CHEBI:15379"/>
        <dbReference type="ChEBI" id="CHEBI:15740"/>
        <dbReference type="ChEBI" id="CHEBI:17245"/>
        <dbReference type="ChEBI" id="CHEBI:49016"/>
        <dbReference type="ChEBI" id="CHEBI:49252"/>
        <dbReference type="EC" id="1.13.11.53"/>
    </reaction>
</comment>
<comment type="cofactor">
    <cofactor evidence="1">
        <name>Fe(2+)</name>
        <dbReference type="ChEBI" id="CHEBI:29033"/>
    </cofactor>
    <cofactor evidence="1">
        <name>Ni(2+)</name>
        <dbReference type="ChEBI" id="CHEBI:49786"/>
    </cofactor>
    <text evidence="1">Binds either 1 Fe or Ni cation per monomer. Iron-binding promotes an acireductone dioxygenase reaction producing 2-keto-4-methylthiobutyrate, while nickel-binding promotes an acireductone dioxygenase reaction producing 3-(methylsulfanyl)propanoate.</text>
</comment>
<comment type="pathway">
    <text evidence="1">Amino-acid biosynthesis; L-methionine biosynthesis via salvage pathway; L-methionine from S-methyl-5-thio-alpha-D-ribose 1-phosphate: step 5/6.</text>
</comment>
<comment type="subunit">
    <text evidence="1">Monomer. Interacts with MMP14.</text>
</comment>
<comment type="subcellular location">
    <subcellularLocation>
        <location evidence="1">Cytoplasm</location>
    </subcellularLocation>
    <subcellularLocation>
        <location evidence="1 3">Nucleus</location>
    </subcellularLocation>
    <subcellularLocation>
        <location evidence="1 3">Cell membrane</location>
        <topology evidence="1 3">Peripheral membrane protein</topology>
        <orientation evidence="1 3">Cytoplasmic side</orientation>
    </subcellularLocation>
    <text evidence="1">Localizes to the plasma membrane when complexed to MMP14.</text>
</comment>
<comment type="tissue specificity">
    <text evidence="3">Detected in prostate, liver, heart, brain, muscle, kidney and seminal vesicles.</text>
</comment>
<comment type="induction">
    <text evidence="3">Up-regulated by androgens in the prostate, but not in the other tissues tested.</text>
</comment>
<comment type="similarity">
    <text evidence="1">Belongs to the acireductone dioxygenase (ARD) family.</text>
</comment>
<protein>
    <recommendedName>
        <fullName evidence="1">Acireductone dioxygenase</fullName>
    </recommendedName>
    <alternativeName>
        <fullName evidence="1">Acireductone dioxygenase (Fe(2+)-requiring)</fullName>
        <shortName evidence="1">ARD'</shortName>
        <shortName evidence="1">Fe-ARD</shortName>
        <ecNumber evidence="1">1.13.11.54</ecNumber>
    </alternativeName>
    <alternativeName>
        <fullName evidence="1">Acireductone dioxygenase (Ni(2+)-requiring)</fullName>
        <shortName evidence="1">ARD</shortName>
        <shortName evidence="1">Ni-ARD</shortName>
        <ecNumber evidence="1">1.13.11.53</ecNumber>
    </alternativeName>
    <alternativeName>
        <fullName evidence="4">Androgen-responsive ARD-like protein 1</fullName>
    </alternativeName>
    <alternativeName>
        <fullName evidence="1">Membrane-type 1 matrix metalloproteinase cytoplasmic tail-binding protein 1</fullName>
        <shortName evidence="1">MTCBP-1</shortName>
    </alternativeName>
</protein>
<accession>Q562C9</accession>
<accession>Q6V9S4</accession>
<name>MTND_RAT</name>
<sequence length="179" mass="21461">MVQAWYMDESTADPRMPHRAQPDRPVGLEQLRTLGVLYWKLDADKYENDPELEQIRKTRNYSWMDIITICKDSLPNYEEKIKMFFEEHLHLDEEIRYILEGSGYFDVRDKEDKWIRISMEKGDMITLPAGIYHRFTLDEKNYVKAMRLFVGEPVWTPYNRPADHFDARVQYVKFLEGTA</sequence>
<gene>
    <name type="primary">Adi1</name>
    <name type="synonym">Alp1</name>
    <name type="synonym">Mtcbp1</name>
</gene>
<evidence type="ECO:0000255" key="1">
    <source>
        <dbReference type="HAMAP-Rule" id="MF_03154"/>
    </source>
</evidence>
<evidence type="ECO:0000256" key="2">
    <source>
        <dbReference type="SAM" id="MobiDB-lite"/>
    </source>
</evidence>
<evidence type="ECO:0000269" key="3">
    <source>
    </source>
</evidence>
<evidence type="ECO:0000303" key="4">
    <source>
    </source>
</evidence>
<evidence type="ECO:0000305" key="5"/>
<keyword id="KW-0028">Amino-acid biosynthesis</keyword>
<keyword id="KW-1003">Cell membrane</keyword>
<keyword id="KW-0963">Cytoplasm</keyword>
<keyword id="KW-0223">Dioxygenase</keyword>
<keyword id="KW-0408">Iron</keyword>
<keyword id="KW-0472">Membrane</keyword>
<keyword id="KW-0479">Metal-binding</keyword>
<keyword id="KW-0486">Methionine biosynthesis</keyword>
<keyword id="KW-0533">Nickel</keyword>
<keyword id="KW-0539">Nucleus</keyword>
<keyword id="KW-0560">Oxidoreductase</keyword>
<keyword id="KW-1185">Reference proteome</keyword>
<proteinExistence type="evidence at transcript level"/>
<feature type="chain" id="PRO_0000162944" description="Acireductone dioxygenase">
    <location>
        <begin position="1"/>
        <end position="179"/>
    </location>
</feature>
<feature type="region of interest" description="Disordered" evidence="2">
    <location>
        <begin position="1"/>
        <end position="23"/>
    </location>
</feature>
<feature type="binding site" evidence="1">
    <location>
        <position position="88"/>
    </location>
    <ligand>
        <name>Fe(2+)</name>
        <dbReference type="ChEBI" id="CHEBI:29033"/>
        <note>for iron-dependent acireductone dioxygenase activity</note>
    </ligand>
</feature>
<feature type="binding site" evidence="1">
    <location>
        <position position="88"/>
    </location>
    <ligand>
        <name>Ni(2+)</name>
        <dbReference type="ChEBI" id="CHEBI:49786"/>
        <note>for nickel-dependent acireductone dioxygenase activity</note>
    </ligand>
</feature>
<feature type="binding site" evidence="1">
    <location>
        <position position="90"/>
    </location>
    <ligand>
        <name>Fe(2+)</name>
        <dbReference type="ChEBI" id="CHEBI:29033"/>
        <note>for iron-dependent acireductone dioxygenase activity</note>
    </ligand>
</feature>
<feature type="binding site" evidence="1">
    <location>
        <position position="90"/>
    </location>
    <ligand>
        <name>Ni(2+)</name>
        <dbReference type="ChEBI" id="CHEBI:49786"/>
        <note>for nickel-dependent acireductone dioxygenase activity</note>
    </ligand>
</feature>
<feature type="binding site" evidence="1">
    <location>
        <position position="94"/>
    </location>
    <ligand>
        <name>Fe(2+)</name>
        <dbReference type="ChEBI" id="CHEBI:29033"/>
        <note>for iron-dependent acireductone dioxygenase activity</note>
    </ligand>
</feature>
<feature type="binding site" evidence="1">
    <location>
        <position position="94"/>
    </location>
    <ligand>
        <name>Ni(2+)</name>
        <dbReference type="ChEBI" id="CHEBI:49786"/>
        <note>for nickel-dependent acireductone dioxygenase activity</note>
    </ligand>
</feature>
<feature type="binding site" evidence="1">
    <location>
        <position position="133"/>
    </location>
    <ligand>
        <name>Fe(2+)</name>
        <dbReference type="ChEBI" id="CHEBI:29033"/>
        <note>for iron-dependent acireductone dioxygenase activity</note>
    </ligand>
</feature>
<feature type="binding site" evidence="1">
    <location>
        <position position="133"/>
    </location>
    <ligand>
        <name>Ni(2+)</name>
        <dbReference type="ChEBI" id="CHEBI:49786"/>
        <note>for nickel-dependent acireductone dioxygenase activity</note>
    </ligand>
</feature>
<feature type="sequence conflict" description="In Ref. 1; AAQ24524." evidence="5" ref="1">
    <original>P</original>
    <variation>A</variation>
    <location>
        <position position="161"/>
    </location>
</feature>
<dbReference type="EC" id="1.13.11.54" evidence="1"/>
<dbReference type="EC" id="1.13.11.53" evidence="1"/>
<dbReference type="EMBL" id="AY346335">
    <property type="protein sequence ID" value="AAQ24524.1"/>
    <property type="molecule type" value="mRNA"/>
</dbReference>
<dbReference type="EMBL" id="BC092562">
    <property type="protein sequence ID" value="AAH92562.1"/>
    <property type="molecule type" value="mRNA"/>
</dbReference>
<dbReference type="RefSeq" id="NP_954528.2">
    <property type="nucleotide sequence ID" value="NM_199097.2"/>
</dbReference>
<dbReference type="SMR" id="Q562C9"/>
<dbReference type="FunCoup" id="Q562C9">
    <property type="interactions" value="926"/>
</dbReference>
<dbReference type="STRING" id="10116.ENSRNOP00000011952"/>
<dbReference type="PhosphoSitePlus" id="Q562C9"/>
<dbReference type="jPOST" id="Q562C9"/>
<dbReference type="PaxDb" id="10116-ENSRNOP00000011952"/>
<dbReference type="Ensembl" id="ENSRNOT00000011951.7">
    <property type="protein sequence ID" value="ENSRNOP00000011952.3"/>
    <property type="gene ID" value="ENSRNOG00000008950.7"/>
</dbReference>
<dbReference type="GeneID" id="298934"/>
<dbReference type="KEGG" id="rno:298934"/>
<dbReference type="AGR" id="RGD:727828"/>
<dbReference type="CTD" id="55256"/>
<dbReference type="RGD" id="727828">
    <property type="gene designation" value="Adi1"/>
</dbReference>
<dbReference type="eggNOG" id="KOG2107">
    <property type="taxonomic scope" value="Eukaryota"/>
</dbReference>
<dbReference type="GeneTree" id="ENSGT00390000008195"/>
<dbReference type="HOGENOM" id="CLU_090154_0_1_1"/>
<dbReference type="InParanoid" id="Q562C9"/>
<dbReference type="OMA" id="WYMDESQ"/>
<dbReference type="OrthoDB" id="1867259at2759"/>
<dbReference type="PhylomeDB" id="Q562C9"/>
<dbReference type="TreeFam" id="TF300231"/>
<dbReference type="Reactome" id="R-RNO-1237112">
    <property type="pathway name" value="Methionine salvage pathway"/>
</dbReference>
<dbReference type="UniPathway" id="UPA00904">
    <property type="reaction ID" value="UER00878"/>
</dbReference>
<dbReference type="PRO" id="PR:Q562C9"/>
<dbReference type="Proteomes" id="UP000002494">
    <property type="component" value="Chromosome 6"/>
</dbReference>
<dbReference type="Bgee" id="ENSRNOG00000008950">
    <property type="expression patterns" value="Expressed in liver and 20 other cell types or tissues"/>
</dbReference>
<dbReference type="GO" id="GO:0005737">
    <property type="term" value="C:cytoplasm"/>
    <property type="evidence" value="ECO:0000250"/>
    <property type="project" value="UniProtKB"/>
</dbReference>
<dbReference type="GO" id="GO:0005634">
    <property type="term" value="C:nucleus"/>
    <property type="evidence" value="ECO:0000250"/>
    <property type="project" value="UniProtKB"/>
</dbReference>
<dbReference type="GO" id="GO:0005886">
    <property type="term" value="C:plasma membrane"/>
    <property type="evidence" value="ECO:0000250"/>
    <property type="project" value="UniProtKB"/>
</dbReference>
<dbReference type="GO" id="GO:0010308">
    <property type="term" value="F:acireductone dioxygenase (Ni2+-requiring) activity"/>
    <property type="evidence" value="ECO:0007669"/>
    <property type="project" value="UniProtKB-UniRule"/>
</dbReference>
<dbReference type="GO" id="GO:0010309">
    <property type="term" value="F:acireductone dioxygenase [iron(II)-requiring] activity"/>
    <property type="evidence" value="ECO:0000318"/>
    <property type="project" value="GO_Central"/>
</dbReference>
<dbReference type="GO" id="GO:0005506">
    <property type="term" value="F:iron ion binding"/>
    <property type="evidence" value="ECO:0007669"/>
    <property type="project" value="UniProtKB-UniRule"/>
</dbReference>
<dbReference type="GO" id="GO:0016151">
    <property type="term" value="F:nickel cation binding"/>
    <property type="evidence" value="ECO:0007669"/>
    <property type="project" value="UniProtKB-UniRule"/>
</dbReference>
<dbReference type="GO" id="GO:0016491">
    <property type="term" value="F:oxidoreductase activity"/>
    <property type="evidence" value="ECO:0000250"/>
    <property type="project" value="UniProtKB"/>
</dbReference>
<dbReference type="GO" id="GO:0019509">
    <property type="term" value="P:L-methionine salvage from methylthioadenosine"/>
    <property type="evidence" value="ECO:0000250"/>
    <property type="project" value="UniProtKB"/>
</dbReference>
<dbReference type="GO" id="GO:0006555">
    <property type="term" value="P:methionine metabolic process"/>
    <property type="evidence" value="ECO:0000318"/>
    <property type="project" value="GO_Central"/>
</dbReference>
<dbReference type="CDD" id="cd02232">
    <property type="entry name" value="cupin_ARD"/>
    <property type="match status" value="1"/>
</dbReference>
<dbReference type="FunFam" id="2.60.120.10:FF:000031">
    <property type="entry name" value="1,2-dihydroxy-3-keto-5-methylthiopentene dioxygenase"/>
    <property type="match status" value="1"/>
</dbReference>
<dbReference type="Gene3D" id="2.60.120.10">
    <property type="entry name" value="Jelly Rolls"/>
    <property type="match status" value="1"/>
</dbReference>
<dbReference type="HAMAP" id="MF_03154">
    <property type="entry name" value="Salvage_MtnD_euk"/>
    <property type="match status" value="1"/>
</dbReference>
<dbReference type="InterPro" id="IPR004313">
    <property type="entry name" value="ARD"/>
</dbReference>
<dbReference type="InterPro" id="IPR027496">
    <property type="entry name" value="ARD_euk"/>
</dbReference>
<dbReference type="InterPro" id="IPR014710">
    <property type="entry name" value="RmlC-like_jellyroll"/>
</dbReference>
<dbReference type="InterPro" id="IPR011051">
    <property type="entry name" value="RmlC_Cupin_sf"/>
</dbReference>
<dbReference type="PANTHER" id="PTHR23418">
    <property type="entry name" value="ACIREDUCTONE DIOXYGENASE"/>
    <property type="match status" value="1"/>
</dbReference>
<dbReference type="PANTHER" id="PTHR23418:SF0">
    <property type="entry name" value="ACIREDUCTONE DIOXYGENASE"/>
    <property type="match status" value="1"/>
</dbReference>
<dbReference type="Pfam" id="PF03079">
    <property type="entry name" value="ARD"/>
    <property type="match status" value="1"/>
</dbReference>
<dbReference type="SUPFAM" id="SSF51182">
    <property type="entry name" value="RmlC-like cupins"/>
    <property type="match status" value="1"/>
</dbReference>